<feature type="chain" id="PRO_1000077034" description="3-dehydroquinate dehydratase">
    <location>
        <begin position="1"/>
        <end position="145"/>
    </location>
</feature>
<feature type="active site" description="Proton acceptor" evidence="1">
    <location>
        <position position="22"/>
    </location>
</feature>
<feature type="active site" description="Proton donor" evidence="1">
    <location>
        <position position="97"/>
    </location>
</feature>
<feature type="binding site" evidence="1">
    <location>
        <position position="71"/>
    </location>
    <ligand>
        <name>substrate</name>
    </ligand>
</feature>
<feature type="binding site" evidence="1">
    <location>
        <position position="77"/>
    </location>
    <ligand>
        <name>substrate</name>
    </ligand>
</feature>
<feature type="binding site" evidence="1">
    <location>
        <position position="84"/>
    </location>
    <ligand>
        <name>substrate</name>
    </ligand>
</feature>
<feature type="binding site" evidence="1">
    <location>
        <begin position="98"/>
        <end position="99"/>
    </location>
    <ligand>
        <name>substrate</name>
    </ligand>
</feature>
<feature type="binding site" evidence="1">
    <location>
        <position position="108"/>
    </location>
    <ligand>
        <name>substrate</name>
    </ligand>
</feature>
<feature type="site" description="Transition state stabilizer" evidence="1">
    <location>
        <position position="17"/>
    </location>
</feature>
<protein>
    <recommendedName>
        <fullName evidence="1">3-dehydroquinate dehydratase</fullName>
        <shortName evidence="1">3-dehydroquinase</shortName>
        <ecNumber evidence="1">4.2.1.10</ecNumber>
    </recommendedName>
    <alternativeName>
        <fullName evidence="1">Type II DHQase</fullName>
    </alternativeName>
</protein>
<organism>
    <name type="scientific">Francisella philomiragia subsp. philomiragia (strain ATCC 25017 / CCUG 19701 / FSC 153 / O#319-036)</name>
    <dbReference type="NCBI Taxonomy" id="484022"/>
    <lineage>
        <taxon>Bacteria</taxon>
        <taxon>Pseudomonadati</taxon>
        <taxon>Pseudomonadota</taxon>
        <taxon>Gammaproteobacteria</taxon>
        <taxon>Thiotrichales</taxon>
        <taxon>Francisellaceae</taxon>
        <taxon>Francisella</taxon>
    </lineage>
</organism>
<name>AROQ_FRAP2</name>
<reference key="1">
    <citation type="submission" date="2007-12" db="EMBL/GenBank/DDBJ databases">
        <title>Complete sequence of chromosome of Francisella philomiragia subsp. philomiragia ATCC 25017.</title>
        <authorList>
            <consortium name="US DOE Joint Genome Institute"/>
            <person name="Copeland A."/>
            <person name="Lucas S."/>
            <person name="Lapidus A."/>
            <person name="Barry K."/>
            <person name="Detter J.C."/>
            <person name="Glavina del Rio T."/>
            <person name="Hammon N."/>
            <person name="Israni S."/>
            <person name="Dalin E."/>
            <person name="Tice H."/>
            <person name="Pitluck S."/>
            <person name="Chain P."/>
            <person name="Malfatti S."/>
            <person name="Shin M."/>
            <person name="Vergez L."/>
            <person name="Schmutz J."/>
            <person name="Larimer F."/>
            <person name="Land M."/>
            <person name="Hauser L."/>
            <person name="Richardson P."/>
        </authorList>
    </citation>
    <scope>NUCLEOTIDE SEQUENCE [LARGE SCALE GENOMIC DNA]</scope>
    <source>
        <strain>ATCC 25017 / CCUG 19701 / FSC 153 / O#319-036</strain>
    </source>
</reference>
<sequence>MDVLVINGPNLNLLGKRQPHIYGNKTIEDINNELHKIAHNNNVTIDFFQSNHEGEIVDKIQQSAAKIIIINPAAYTHTSIAIRDAFLAINKPFIEIHLSNIYNREEFRTKSLLSDIAYGCIFGFGPNGYTLALIEAINYINMKGE</sequence>
<dbReference type="EC" id="4.2.1.10" evidence="1"/>
<dbReference type="EMBL" id="CP000937">
    <property type="protein sequence ID" value="ABZ86491.1"/>
    <property type="molecule type" value="Genomic_DNA"/>
</dbReference>
<dbReference type="SMR" id="B0TZ52"/>
<dbReference type="KEGG" id="fph:Fphi_0275"/>
<dbReference type="eggNOG" id="COG0757">
    <property type="taxonomic scope" value="Bacteria"/>
</dbReference>
<dbReference type="HOGENOM" id="CLU_090968_1_0_6"/>
<dbReference type="UniPathway" id="UPA00053">
    <property type="reaction ID" value="UER00086"/>
</dbReference>
<dbReference type="GO" id="GO:0003855">
    <property type="term" value="F:3-dehydroquinate dehydratase activity"/>
    <property type="evidence" value="ECO:0007669"/>
    <property type="project" value="UniProtKB-UniRule"/>
</dbReference>
<dbReference type="GO" id="GO:0008652">
    <property type="term" value="P:amino acid biosynthetic process"/>
    <property type="evidence" value="ECO:0007669"/>
    <property type="project" value="UniProtKB-KW"/>
</dbReference>
<dbReference type="GO" id="GO:0009073">
    <property type="term" value="P:aromatic amino acid family biosynthetic process"/>
    <property type="evidence" value="ECO:0007669"/>
    <property type="project" value="UniProtKB-KW"/>
</dbReference>
<dbReference type="GO" id="GO:0009423">
    <property type="term" value="P:chorismate biosynthetic process"/>
    <property type="evidence" value="ECO:0007669"/>
    <property type="project" value="UniProtKB-UniRule"/>
</dbReference>
<dbReference type="GO" id="GO:0019631">
    <property type="term" value="P:quinate catabolic process"/>
    <property type="evidence" value="ECO:0007669"/>
    <property type="project" value="TreeGrafter"/>
</dbReference>
<dbReference type="CDD" id="cd00466">
    <property type="entry name" value="DHQase_II"/>
    <property type="match status" value="1"/>
</dbReference>
<dbReference type="Gene3D" id="3.40.50.9100">
    <property type="entry name" value="Dehydroquinase, class II"/>
    <property type="match status" value="1"/>
</dbReference>
<dbReference type="HAMAP" id="MF_00169">
    <property type="entry name" value="AroQ"/>
    <property type="match status" value="1"/>
</dbReference>
<dbReference type="InterPro" id="IPR001874">
    <property type="entry name" value="DHquinase_II"/>
</dbReference>
<dbReference type="InterPro" id="IPR018509">
    <property type="entry name" value="DHquinase_II_CS"/>
</dbReference>
<dbReference type="InterPro" id="IPR036441">
    <property type="entry name" value="DHquinase_II_sf"/>
</dbReference>
<dbReference type="NCBIfam" id="TIGR01088">
    <property type="entry name" value="aroQ"/>
    <property type="match status" value="1"/>
</dbReference>
<dbReference type="NCBIfam" id="NF003804">
    <property type="entry name" value="PRK05395.1-1"/>
    <property type="match status" value="1"/>
</dbReference>
<dbReference type="NCBIfam" id="NF003805">
    <property type="entry name" value="PRK05395.1-2"/>
    <property type="match status" value="1"/>
</dbReference>
<dbReference type="NCBIfam" id="NF003806">
    <property type="entry name" value="PRK05395.1-3"/>
    <property type="match status" value="1"/>
</dbReference>
<dbReference type="NCBIfam" id="NF003807">
    <property type="entry name" value="PRK05395.1-4"/>
    <property type="match status" value="1"/>
</dbReference>
<dbReference type="PANTHER" id="PTHR21272">
    <property type="entry name" value="CATABOLIC 3-DEHYDROQUINASE"/>
    <property type="match status" value="1"/>
</dbReference>
<dbReference type="PANTHER" id="PTHR21272:SF3">
    <property type="entry name" value="CATABOLIC 3-DEHYDROQUINASE"/>
    <property type="match status" value="1"/>
</dbReference>
<dbReference type="Pfam" id="PF01220">
    <property type="entry name" value="DHquinase_II"/>
    <property type="match status" value="1"/>
</dbReference>
<dbReference type="PIRSF" id="PIRSF001399">
    <property type="entry name" value="DHquinase_II"/>
    <property type="match status" value="1"/>
</dbReference>
<dbReference type="SUPFAM" id="SSF52304">
    <property type="entry name" value="Type II 3-dehydroquinate dehydratase"/>
    <property type="match status" value="1"/>
</dbReference>
<dbReference type="PROSITE" id="PS01029">
    <property type="entry name" value="DEHYDROQUINASE_II"/>
    <property type="match status" value="1"/>
</dbReference>
<comment type="function">
    <text evidence="1">Catalyzes a trans-dehydration via an enolate intermediate.</text>
</comment>
<comment type="catalytic activity">
    <reaction evidence="1">
        <text>3-dehydroquinate = 3-dehydroshikimate + H2O</text>
        <dbReference type="Rhea" id="RHEA:21096"/>
        <dbReference type="ChEBI" id="CHEBI:15377"/>
        <dbReference type="ChEBI" id="CHEBI:16630"/>
        <dbReference type="ChEBI" id="CHEBI:32364"/>
        <dbReference type="EC" id="4.2.1.10"/>
    </reaction>
</comment>
<comment type="pathway">
    <text evidence="1">Metabolic intermediate biosynthesis; chorismate biosynthesis; chorismate from D-erythrose 4-phosphate and phosphoenolpyruvate: step 3/7.</text>
</comment>
<comment type="subunit">
    <text evidence="1">Homododecamer.</text>
</comment>
<comment type="similarity">
    <text evidence="1">Belongs to the type-II 3-dehydroquinase family.</text>
</comment>
<gene>
    <name evidence="1" type="primary">aroQ</name>
    <name type="ordered locus">Fphi_0275</name>
</gene>
<evidence type="ECO:0000255" key="1">
    <source>
        <dbReference type="HAMAP-Rule" id="MF_00169"/>
    </source>
</evidence>
<accession>B0TZ52</accession>
<proteinExistence type="inferred from homology"/>
<keyword id="KW-0028">Amino-acid biosynthesis</keyword>
<keyword id="KW-0057">Aromatic amino acid biosynthesis</keyword>
<keyword id="KW-0456">Lyase</keyword>